<comment type="function">
    <text evidence="1">One of the primary rRNA binding proteins, it binds specifically to the 5'-end of 16S ribosomal RNA.</text>
</comment>
<comment type="subunit">
    <text evidence="1">Part of the 30S ribosomal subunit.</text>
</comment>
<comment type="similarity">
    <text evidence="1">Belongs to the universal ribosomal protein uS17 family.</text>
</comment>
<keyword id="KW-0687">Ribonucleoprotein</keyword>
<keyword id="KW-0689">Ribosomal protein</keyword>
<keyword id="KW-0694">RNA-binding</keyword>
<keyword id="KW-0699">rRNA-binding</keyword>
<evidence type="ECO:0000255" key="1">
    <source>
        <dbReference type="HAMAP-Rule" id="MF_01345"/>
    </source>
</evidence>
<evidence type="ECO:0000305" key="2"/>
<organism>
    <name type="scientific">Pseudomonas savastanoi pv. phaseolicola (strain 1448A / Race 6)</name>
    <name type="common">Pseudomonas syringae pv. phaseolicola (strain 1448A / Race 6)</name>
    <dbReference type="NCBI Taxonomy" id="264730"/>
    <lineage>
        <taxon>Bacteria</taxon>
        <taxon>Pseudomonadati</taxon>
        <taxon>Pseudomonadota</taxon>
        <taxon>Gammaproteobacteria</taxon>
        <taxon>Pseudomonadales</taxon>
        <taxon>Pseudomonadaceae</taxon>
        <taxon>Pseudomonas</taxon>
    </lineage>
</organism>
<dbReference type="EMBL" id="CP000058">
    <property type="protein sequence ID" value="AAZ37212.1"/>
    <property type="molecule type" value="Genomic_DNA"/>
</dbReference>
<dbReference type="RefSeq" id="WP_002555480.1">
    <property type="nucleotide sequence ID" value="NC_005773.3"/>
</dbReference>
<dbReference type="SMR" id="Q48D45"/>
<dbReference type="GeneID" id="96221021"/>
<dbReference type="KEGG" id="psp:PSPPH_4583"/>
<dbReference type="eggNOG" id="COG0186">
    <property type="taxonomic scope" value="Bacteria"/>
</dbReference>
<dbReference type="HOGENOM" id="CLU_073626_1_1_6"/>
<dbReference type="Proteomes" id="UP000000551">
    <property type="component" value="Chromosome"/>
</dbReference>
<dbReference type="GO" id="GO:0022627">
    <property type="term" value="C:cytosolic small ribosomal subunit"/>
    <property type="evidence" value="ECO:0007669"/>
    <property type="project" value="TreeGrafter"/>
</dbReference>
<dbReference type="GO" id="GO:0019843">
    <property type="term" value="F:rRNA binding"/>
    <property type="evidence" value="ECO:0007669"/>
    <property type="project" value="UniProtKB-UniRule"/>
</dbReference>
<dbReference type="GO" id="GO:0003735">
    <property type="term" value="F:structural constituent of ribosome"/>
    <property type="evidence" value="ECO:0007669"/>
    <property type="project" value="InterPro"/>
</dbReference>
<dbReference type="GO" id="GO:0006412">
    <property type="term" value="P:translation"/>
    <property type="evidence" value="ECO:0007669"/>
    <property type="project" value="UniProtKB-UniRule"/>
</dbReference>
<dbReference type="CDD" id="cd00364">
    <property type="entry name" value="Ribosomal_uS17"/>
    <property type="match status" value="1"/>
</dbReference>
<dbReference type="FunFam" id="2.40.50.140:FF:000014">
    <property type="entry name" value="30S ribosomal protein S17"/>
    <property type="match status" value="1"/>
</dbReference>
<dbReference type="Gene3D" id="2.40.50.140">
    <property type="entry name" value="Nucleic acid-binding proteins"/>
    <property type="match status" value="1"/>
</dbReference>
<dbReference type="HAMAP" id="MF_01345_B">
    <property type="entry name" value="Ribosomal_uS17_B"/>
    <property type="match status" value="1"/>
</dbReference>
<dbReference type="InterPro" id="IPR012340">
    <property type="entry name" value="NA-bd_OB-fold"/>
</dbReference>
<dbReference type="InterPro" id="IPR000266">
    <property type="entry name" value="Ribosomal_uS17"/>
</dbReference>
<dbReference type="InterPro" id="IPR019984">
    <property type="entry name" value="Ribosomal_uS17_bact/chlr"/>
</dbReference>
<dbReference type="NCBIfam" id="NF004123">
    <property type="entry name" value="PRK05610.1"/>
    <property type="match status" value="1"/>
</dbReference>
<dbReference type="NCBIfam" id="TIGR03635">
    <property type="entry name" value="uS17_bact"/>
    <property type="match status" value="1"/>
</dbReference>
<dbReference type="PANTHER" id="PTHR10744">
    <property type="entry name" value="40S RIBOSOMAL PROTEIN S11 FAMILY MEMBER"/>
    <property type="match status" value="1"/>
</dbReference>
<dbReference type="PANTHER" id="PTHR10744:SF1">
    <property type="entry name" value="SMALL RIBOSOMAL SUBUNIT PROTEIN US17M"/>
    <property type="match status" value="1"/>
</dbReference>
<dbReference type="Pfam" id="PF00366">
    <property type="entry name" value="Ribosomal_S17"/>
    <property type="match status" value="1"/>
</dbReference>
<dbReference type="PRINTS" id="PR00973">
    <property type="entry name" value="RIBOSOMALS17"/>
</dbReference>
<dbReference type="SUPFAM" id="SSF50249">
    <property type="entry name" value="Nucleic acid-binding proteins"/>
    <property type="match status" value="1"/>
</dbReference>
<accession>Q48D45</accession>
<sequence>MAEAEKTVRTLTGRVVSDKMDKTITVLIERRVKHPIYGKYVKRSTKLHAHDETNQCHIGDKVTIRETRPVAKTKSWALVDILERAVEV</sequence>
<feature type="chain" id="PRO_0000233546" description="Small ribosomal subunit protein uS17">
    <location>
        <begin position="1"/>
        <end position="88"/>
    </location>
</feature>
<gene>
    <name evidence="1" type="primary">rpsQ</name>
    <name type="ordered locus">PSPPH_4583</name>
</gene>
<reference key="1">
    <citation type="journal article" date="2005" name="J. Bacteriol.">
        <title>Whole-genome sequence analysis of Pseudomonas syringae pv. phaseolicola 1448A reveals divergence among pathovars in genes involved in virulence and transposition.</title>
        <authorList>
            <person name="Joardar V."/>
            <person name="Lindeberg M."/>
            <person name="Jackson R.W."/>
            <person name="Selengut J."/>
            <person name="Dodson R."/>
            <person name="Brinkac L.M."/>
            <person name="Daugherty S.C."/>
            <person name="DeBoy R.T."/>
            <person name="Durkin A.S."/>
            <person name="Gwinn Giglio M."/>
            <person name="Madupu R."/>
            <person name="Nelson W.C."/>
            <person name="Rosovitz M.J."/>
            <person name="Sullivan S.A."/>
            <person name="Crabtree J."/>
            <person name="Creasy T."/>
            <person name="Davidsen T.M."/>
            <person name="Haft D.H."/>
            <person name="Zafar N."/>
            <person name="Zhou L."/>
            <person name="Halpin R."/>
            <person name="Holley T."/>
            <person name="Khouri H.M."/>
            <person name="Feldblyum T.V."/>
            <person name="White O."/>
            <person name="Fraser C.M."/>
            <person name="Chatterjee A.K."/>
            <person name="Cartinhour S."/>
            <person name="Schneider D."/>
            <person name="Mansfield J.W."/>
            <person name="Collmer A."/>
            <person name="Buell R."/>
        </authorList>
    </citation>
    <scope>NUCLEOTIDE SEQUENCE [LARGE SCALE GENOMIC DNA]</scope>
    <source>
        <strain>1448A / Race 6</strain>
    </source>
</reference>
<name>RS17_PSE14</name>
<proteinExistence type="inferred from homology"/>
<protein>
    <recommendedName>
        <fullName evidence="1">Small ribosomal subunit protein uS17</fullName>
    </recommendedName>
    <alternativeName>
        <fullName evidence="2">30S ribosomal protein S17</fullName>
    </alternativeName>
</protein>